<gene>
    <name type="ordered locus">Ajs_0902</name>
</gene>
<organism>
    <name type="scientific">Acidovorax sp. (strain JS42)</name>
    <dbReference type="NCBI Taxonomy" id="232721"/>
    <lineage>
        <taxon>Bacteria</taxon>
        <taxon>Pseudomonadati</taxon>
        <taxon>Pseudomonadota</taxon>
        <taxon>Betaproteobacteria</taxon>
        <taxon>Burkholderiales</taxon>
        <taxon>Comamonadaceae</taxon>
        <taxon>Acidovorax</taxon>
    </lineage>
</organism>
<feature type="chain" id="PRO_0000383208" description="Nucleotide-binding protein Ajs_0902">
    <location>
        <begin position="1"/>
        <end position="287"/>
    </location>
</feature>
<feature type="binding site" evidence="1">
    <location>
        <begin position="10"/>
        <end position="17"/>
    </location>
    <ligand>
        <name>ATP</name>
        <dbReference type="ChEBI" id="CHEBI:30616"/>
    </ligand>
</feature>
<feature type="binding site" evidence="1">
    <location>
        <begin position="59"/>
        <end position="62"/>
    </location>
    <ligand>
        <name>GTP</name>
        <dbReference type="ChEBI" id="CHEBI:37565"/>
    </ligand>
</feature>
<protein>
    <recommendedName>
        <fullName evidence="1">Nucleotide-binding protein Ajs_0902</fullName>
    </recommendedName>
</protein>
<sequence length="287" mass="32428">MDLEVVVITGMSGSGKSVALHALEDAGYYCVDNLPPELLTSFVELEHAHHGHRVAVAMDVRSATALPLVPQQLAGLREQGVQVRQLFLDATDDVLVRRFSETRRRHPLSQAEMREGPRPLLHTMRLERELLAPLREQAHVIDTSTLRSAQLLSYVKDLLSVPPSRLTLVFQSFAFKRGISMDADYVFDVRMLPNPHYEPLLRALTGKDAPVIDYLRQQPEVALMLAHIGDFLDHWLDALAHNHRSYVTVAIGCTGGQHRSVYLVEQLAARFEGRWNTLRRHRELDGI</sequence>
<accession>A1W4G9</accession>
<name>Y902_ACISJ</name>
<reference key="1">
    <citation type="submission" date="2006-12" db="EMBL/GenBank/DDBJ databases">
        <title>Complete sequence of chromosome 1 of Acidovorax sp. JS42.</title>
        <authorList>
            <person name="Copeland A."/>
            <person name="Lucas S."/>
            <person name="Lapidus A."/>
            <person name="Barry K."/>
            <person name="Detter J.C."/>
            <person name="Glavina del Rio T."/>
            <person name="Dalin E."/>
            <person name="Tice H."/>
            <person name="Pitluck S."/>
            <person name="Chertkov O."/>
            <person name="Brettin T."/>
            <person name="Bruce D."/>
            <person name="Han C."/>
            <person name="Tapia R."/>
            <person name="Gilna P."/>
            <person name="Schmutz J."/>
            <person name="Larimer F."/>
            <person name="Land M."/>
            <person name="Hauser L."/>
            <person name="Kyrpides N."/>
            <person name="Kim E."/>
            <person name="Stahl D."/>
            <person name="Richardson P."/>
        </authorList>
    </citation>
    <scope>NUCLEOTIDE SEQUENCE [LARGE SCALE GENOMIC DNA]</scope>
    <source>
        <strain>JS42</strain>
    </source>
</reference>
<keyword id="KW-0067">ATP-binding</keyword>
<keyword id="KW-0342">GTP-binding</keyword>
<keyword id="KW-0547">Nucleotide-binding</keyword>
<comment type="function">
    <text evidence="1">Displays ATPase and GTPase activities.</text>
</comment>
<comment type="similarity">
    <text evidence="1">Belongs to the RapZ-like family.</text>
</comment>
<dbReference type="EMBL" id="CP000539">
    <property type="protein sequence ID" value="ABM41144.1"/>
    <property type="molecule type" value="Genomic_DNA"/>
</dbReference>
<dbReference type="SMR" id="A1W4G9"/>
<dbReference type="STRING" id="232721.Ajs_0902"/>
<dbReference type="KEGG" id="ajs:Ajs_0902"/>
<dbReference type="eggNOG" id="COG1660">
    <property type="taxonomic scope" value="Bacteria"/>
</dbReference>
<dbReference type="HOGENOM" id="CLU_059558_1_1_4"/>
<dbReference type="Proteomes" id="UP000000645">
    <property type="component" value="Chromosome"/>
</dbReference>
<dbReference type="GO" id="GO:0005524">
    <property type="term" value="F:ATP binding"/>
    <property type="evidence" value="ECO:0007669"/>
    <property type="project" value="UniProtKB-UniRule"/>
</dbReference>
<dbReference type="GO" id="GO:0005525">
    <property type="term" value="F:GTP binding"/>
    <property type="evidence" value="ECO:0007669"/>
    <property type="project" value="UniProtKB-UniRule"/>
</dbReference>
<dbReference type="Gene3D" id="3.40.50.300">
    <property type="entry name" value="P-loop containing nucleotide triphosphate hydrolases"/>
    <property type="match status" value="1"/>
</dbReference>
<dbReference type="HAMAP" id="MF_00636">
    <property type="entry name" value="RapZ_like"/>
    <property type="match status" value="1"/>
</dbReference>
<dbReference type="InterPro" id="IPR027417">
    <property type="entry name" value="P-loop_NTPase"/>
</dbReference>
<dbReference type="InterPro" id="IPR005337">
    <property type="entry name" value="RapZ-like"/>
</dbReference>
<dbReference type="InterPro" id="IPR053930">
    <property type="entry name" value="RapZ-like_N"/>
</dbReference>
<dbReference type="InterPro" id="IPR053931">
    <property type="entry name" value="RapZ_C"/>
</dbReference>
<dbReference type="NCBIfam" id="NF003828">
    <property type="entry name" value="PRK05416.1"/>
    <property type="match status" value="1"/>
</dbReference>
<dbReference type="PANTHER" id="PTHR30448">
    <property type="entry name" value="RNASE ADAPTER PROTEIN RAPZ"/>
    <property type="match status" value="1"/>
</dbReference>
<dbReference type="PANTHER" id="PTHR30448:SF0">
    <property type="entry name" value="RNASE ADAPTER PROTEIN RAPZ"/>
    <property type="match status" value="1"/>
</dbReference>
<dbReference type="Pfam" id="PF22740">
    <property type="entry name" value="PapZ_C"/>
    <property type="match status" value="1"/>
</dbReference>
<dbReference type="Pfam" id="PF03668">
    <property type="entry name" value="RapZ-like_N"/>
    <property type="match status" value="1"/>
</dbReference>
<dbReference type="PIRSF" id="PIRSF005052">
    <property type="entry name" value="P-loopkin"/>
    <property type="match status" value="1"/>
</dbReference>
<dbReference type="SUPFAM" id="SSF52540">
    <property type="entry name" value="P-loop containing nucleoside triphosphate hydrolases"/>
    <property type="match status" value="1"/>
</dbReference>
<evidence type="ECO:0000255" key="1">
    <source>
        <dbReference type="HAMAP-Rule" id="MF_00636"/>
    </source>
</evidence>
<proteinExistence type="inferred from homology"/>